<reference key="1">
    <citation type="journal article" date="1985" name="J. Biochem.">
        <title>Comparative study on amino acid sequences of Kunitz-type soybean trypsin inhibitors, Tia, Tib, and Tic.</title>
        <authorList>
            <person name="Kim S.-H."/>
            <person name="Hara S."/>
            <person name="Hase S."/>
            <person name="Ikenaka T."/>
            <person name="Toda H."/>
            <person name="Kitamura K."/>
            <person name="Kaizuma N."/>
        </authorList>
    </citation>
    <scope>PROTEIN SEQUENCE</scope>
    <source>
        <strain>cv. Norin No. 2</strain>
    </source>
</reference>
<dbReference type="PIR" id="A01310">
    <property type="entry name" value="TISYB"/>
</dbReference>
<dbReference type="BMRB" id="P01071"/>
<dbReference type="SMR" id="P01071"/>
<dbReference type="STRING" id="3847.P01071"/>
<dbReference type="InParanoid" id="P01071"/>
<dbReference type="Proteomes" id="UP000008827">
    <property type="component" value="Unplaced"/>
</dbReference>
<dbReference type="GO" id="GO:0004867">
    <property type="term" value="F:serine-type endopeptidase inhibitor activity"/>
    <property type="evidence" value="ECO:0007669"/>
    <property type="project" value="UniProtKB-KW"/>
</dbReference>
<dbReference type="CDD" id="cd23363">
    <property type="entry name" value="beta-trefoil_STI_SKTI"/>
    <property type="match status" value="1"/>
</dbReference>
<dbReference type="DisProt" id="DP01971"/>
<dbReference type="Gene3D" id="2.80.10.50">
    <property type="match status" value="1"/>
</dbReference>
<dbReference type="InterPro" id="IPR011065">
    <property type="entry name" value="Kunitz_inhibitor_STI-like_sf"/>
</dbReference>
<dbReference type="InterPro" id="IPR002160">
    <property type="entry name" value="Prot_inh_Kunz-lg"/>
</dbReference>
<dbReference type="PANTHER" id="PTHR33107">
    <property type="entry name" value="KUNITZ TRYPSIN INHIBITOR 2"/>
    <property type="match status" value="1"/>
</dbReference>
<dbReference type="PANTHER" id="PTHR33107:SF81">
    <property type="entry name" value="TRYPSIN INHIBITOR A"/>
    <property type="match status" value="1"/>
</dbReference>
<dbReference type="Pfam" id="PF00197">
    <property type="entry name" value="Kunitz_legume"/>
    <property type="match status" value="1"/>
</dbReference>
<dbReference type="PRINTS" id="PR00291">
    <property type="entry name" value="KUNITZINHBTR"/>
</dbReference>
<dbReference type="SMART" id="SM00452">
    <property type="entry name" value="STI"/>
    <property type="match status" value="1"/>
</dbReference>
<dbReference type="SUPFAM" id="SSF50386">
    <property type="entry name" value="STI-like"/>
    <property type="match status" value="1"/>
</dbReference>
<dbReference type="PROSITE" id="PS00283">
    <property type="entry name" value="SOYBEAN_KUNITZ"/>
    <property type="match status" value="1"/>
</dbReference>
<feature type="chain" id="PRO_0000083285" description="Trypsin inhibitor B">
    <location>
        <begin position="1"/>
        <end position="181"/>
    </location>
</feature>
<feature type="site" description="Reactive bond for trypsin">
    <location>
        <begin position="63"/>
        <end position="64"/>
    </location>
</feature>
<feature type="disulfide bond" evidence="1">
    <location>
        <begin position="39"/>
        <end position="86"/>
    </location>
</feature>
<feature type="disulfide bond" evidence="1">
    <location>
        <begin position="136"/>
        <end position="145"/>
    </location>
</feature>
<organism>
    <name type="scientific">Glycine max</name>
    <name type="common">Soybean</name>
    <name type="synonym">Glycine hispida</name>
    <dbReference type="NCBI Taxonomy" id="3847"/>
    <lineage>
        <taxon>Eukaryota</taxon>
        <taxon>Viridiplantae</taxon>
        <taxon>Streptophyta</taxon>
        <taxon>Embryophyta</taxon>
        <taxon>Tracheophyta</taxon>
        <taxon>Spermatophyta</taxon>
        <taxon>Magnoliopsida</taxon>
        <taxon>eudicotyledons</taxon>
        <taxon>Gunneridae</taxon>
        <taxon>Pentapetalae</taxon>
        <taxon>rosids</taxon>
        <taxon>fabids</taxon>
        <taxon>Fabales</taxon>
        <taxon>Fabaceae</taxon>
        <taxon>Papilionoideae</taxon>
        <taxon>50 kb inversion clade</taxon>
        <taxon>NPAAA clade</taxon>
        <taxon>indigoferoid/millettioid clade</taxon>
        <taxon>Phaseoleae</taxon>
        <taxon>Glycine</taxon>
        <taxon>Glycine subgen. Soja</taxon>
    </lineage>
</organism>
<proteinExistence type="evidence at protein level"/>
<keyword id="KW-0903">Direct protein sequencing</keyword>
<keyword id="KW-1015">Disulfide bond</keyword>
<keyword id="KW-0646">Protease inhibitor</keyword>
<keyword id="KW-1185">Reference proteome</keyword>
<keyword id="KW-0722">Serine protease inhibitor</keyword>
<protein>
    <recommendedName>
        <fullName>Trypsin inhibitor B</fullName>
    </recommendedName>
    <alternativeName>
        <fullName>Kunitz-type trypsin inhibitor B</fullName>
    </alternativeName>
</protein>
<accession>P01071</accession>
<evidence type="ECO:0000250" key="1"/>
<evidence type="ECO:0000305" key="2"/>
<sequence length="181" mass="20041">DFVLDNEGNPLSNGGTYYILSDITAFGGIRAAPTGNERCPLTVVQSRNELDKGIGTIISSPFRIRFIAEGNPLRLKFDSFAVIMLCVGIPTEWSVVEDLPEGPAVKIGENKDAVDGWFRIERVSDDEFNNYKLVFCTQQAEDDKCGDIGISIDHDDGTRRLVVSKNKPLVVQFQKVDKESL</sequence>
<comment type="function">
    <text>Inhibition of trypsin.</text>
</comment>
<comment type="miscellaneous">
    <text>Electrophoresis identifies three genetically distinct variants, A, B, and C, that are inherited as codominant alleles.</text>
</comment>
<comment type="similarity">
    <text evidence="2">Belongs to the protease inhibitor I3 (leguminous Kunitz-type inhibitor) family.</text>
</comment>
<name>ITRB_SOYBN</name>